<reference key="1">
    <citation type="submission" date="2006-06" db="EMBL/GenBank/DDBJ databases">
        <title>Complete sequence of Pseudoalteromonas atlantica T6c.</title>
        <authorList>
            <consortium name="US DOE Joint Genome Institute"/>
            <person name="Copeland A."/>
            <person name="Lucas S."/>
            <person name="Lapidus A."/>
            <person name="Barry K."/>
            <person name="Detter J.C."/>
            <person name="Glavina del Rio T."/>
            <person name="Hammon N."/>
            <person name="Israni S."/>
            <person name="Dalin E."/>
            <person name="Tice H."/>
            <person name="Pitluck S."/>
            <person name="Saunders E."/>
            <person name="Brettin T."/>
            <person name="Bruce D."/>
            <person name="Han C."/>
            <person name="Tapia R."/>
            <person name="Gilna P."/>
            <person name="Schmutz J."/>
            <person name="Larimer F."/>
            <person name="Land M."/>
            <person name="Hauser L."/>
            <person name="Kyrpides N."/>
            <person name="Kim E."/>
            <person name="Karls A.C."/>
            <person name="Bartlett D."/>
            <person name="Higgins B.P."/>
            <person name="Richardson P."/>
        </authorList>
    </citation>
    <scope>NUCLEOTIDE SEQUENCE [LARGE SCALE GENOMIC DNA]</scope>
    <source>
        <strain>T6c / ATCC BAA-1087</strain>
    </source>
</reference>
<keyword id="KW-0963">Cytoplasm</keyword>
<keyword id="KW-0489">Methyltransferase</keyword>
<keyword id="KW-0698">rRNA processing</keyword>
<keyword id="KW-0949">S-adenosyl-L-methionine</keyword>
<keyword id="KW-0808">Transferase</keyword>
<accession>Q15TS0</accession>
<sequence length="356" mass="40475">MAGLALYCRTGFEKDLANEVVEKCAELNVYGYPELKTNSGLVLFQCYQAEDADKLAKTLPLTTLIFARQLFAFSERCEQLDTSDRIGPILNGCIEFPECGELRVEHADSTQGREISKFCRKISVPLRQALRGKRILTPLERSNLPVCHVYFEDSTTAIVGYSYPANNSSYPLGILRLKFPNEAPSRSTLKLDEAFQLFIPKKEQAKRLSGGLHAVDLGACPGGWTYQLVKRGMFVEAVDNGAMDEALMATGQVRYCPEDGFKFQPRKNNVYWLVCDMIEQPQRVAKLMATWIATKRCQETVFNLKLPMKKRYESVKEALQIIDQCIDQHRAGPYDLKVKHLYHDREEVTVHMRLNT</sequence>
<comment type="function">
    <text evidence="1">Catalyzes the 2'-O-methylation at nucleotide C2498 in 23S rRNA.</text>
</comment>
<comment type="catalytic activity">
    <reaction evidence="1">
        <text>cytidine(2498) in 23S rRNA + S-adenosyl-L-methionine = 2'-O-methylcytidine(2498) in 23S rRNA + S-adenosyl-L-homocysteine + H(+)</text>
        <dbReference type="Rhea" id="RHEA:42788"/>
        <dbReference type="Rhea" id="RHEA-COMP:10244"/>
        <dbReference type="Rhea" id="RHEA-COMP:10245"/>
        <dbReference type="ChEBI" id="CHEBI:15378"/>
        <dbReference type="ChEBI" id="CHEBI:57856"/>
        <dbReference type="ChEBI" id="CHEBI:59789"/>
        <dbReference type="ChEBI" id="CHEBI:74495"/>
        <dbReference type="ChEBI" id="CHEBI:82748"/>
        <dbReference type="EC" id="2.1.1.186"/>
    </reaction>
</comment>
<comment type="subunit">
    <text evidence="1">Monomer.</text>
</comment>
<comment type="subcellular location">
    <subcellularLocation>
        <location evidence="1">Cytoplasm</location>
    </subcellularLocation>
</comment>
<comment type="similarity">
    <text evidence="1">Belongs to the class I-like SAM-binding methyltransferase superfamily. RNA methyltransferase RlmE family. RlmM subfamily.</text>
</comment>
<evidence type="ECO:0000255" key="1">
    <source>
        <dbReference type="HAMAP-Rule" id="MF_01551"/>
    </source>
</evidence>
<name>RLMM_PSEA6</name>
<gene>
    <name evidence="1" type="primary">rlmM</name>
    <name type="ordered locus">Patl_2200</name>
</gene>
<organism>
    <name type="scientific">Pseudoalteromonas atlantica (strain T6c / ATCC BAA-1087)</name>
    <dbReference type="NCBI Taxonomy" id="3042615"/>
    <lineage>
        <taxon>Bacteria</taxon>
        <taxon>Pseudomonadati</taxon>
        <taxon>Pseudomonadota</taxon>
        <taxon>Gammaproteobacteria</taxon>
        <taxon>Alteromonadales</taxon>
        <taxon>Alteromonadaceae</taxon>
        <taxon>Paraglaciecola</taxon>
    </lineage>
</organism>
<proteinExistence type="inferred from homology"/>
<dbReference type="EC" id="2.1.1.186" evidence="1"/>
<dbReference type="EMBL" id="CP000388">
    <property type="protein sequence ID" value="ABG40718.1"/>
    <property type="molecule type" value="Genomic_DNA"/>
</dbReference>
<dbReference type="RefSeq" id="WP_011575001.1">
    <property type="nucleotide sequence ID" value="NC_008228.1"/>
</dbReference>
<dbReference type="SMR" id="Q15TS0"/>
<dbReference type="STRING" id="342610.Patl_2200"/>
<dbReference type="KEGG" id="pat:Patl_2200"/>
<dbReference type="eggNOG" id="COG2933">
    <property type="taxonomic scope" value="Bacteria"/>
</dbReference>
<dbReference type="HOGENOM" id="CLU_043780_0_0_6"/>
<dbReference type="OrthoDB" id="154490at2"/>
<dbReference type="Proteomes" id="UP000001981">
    <property type="component" value="Chromosome"/>
</dbReference>
<dbReference type="GO" id="GO:0005737">
    <property type="term" value="C:cytoplasm"/>
    <property type="evidence" value="ECO:0007669"/>
    <property type="project" value="UniProtKB-SubCell"/>
</dbReference>
<dbReference type="GO" id="GO:0008757">
    <property type="term" value="F:S-adenosylmethionine-dependent methyltransferase activity"/>
    <property type="evidence" value="ECO:0007669"/>
    <property type="project" value="UniProtKB-UniRule"/>
</dbReference>
<dbReference type="GO" id="GO:0032259">
    <property type="term" value="P:methylation"/>
    <property type="evidence" value="ECO:0007669"/>
    <property type="project" value="UniProtKB-KW"/>
</dbReference>
<dbReference type="GO" id="GO:0006364">
    <property type="term" value="P:rRNA processing"/>
    <property type="evidence" value="ECO:0007669"/>
    <property type="project" value="UniProtKB-UniRule"/>
</dbReference>
<dbReference type="Gene3D" id="3.30.2300.20">
    <property type="match status" value="1"/>
</dbReference>
<dbReference type="Gene3D" id="3.30.70.2810">
    <property type="match status" value="1"/>
</dbReference>
<dbReference type="Gene3D" id="3.40.50.150">
    <property type="entry name" value="Vaccinia Virus protein VP39"/>
    <property type="match status" value="1"/>
</dbReference>
<dbReference type="HAMAP" id="MF_01551">
    <property type="entry name" value="23SrRNA_methyltr_M"/>
    <property type="match status" value="1"/>
</dbReference>
<dbReference type="InterPro" id="IPR040739">
    <property type="entry name" value="RlmM_FDX"/>
</dbReference>
<dbReference type="InterPro" id="IPR048646">
    <property type="entry name" value="RlmM_THUMP-like"/>
</dbReference>
<dbReference type="InterPro" id="IPR002877">
    <property type="entry name" value="RNA_MeTrfase_FtsJ_dom"/>
</dbReference>
<dbReference type="InterPro" id="IPR011224">
    <property type="entry name" value="rRNA_MeTrfase_M"/>
</dbReference>
<dbReference type="InterPro" id="IPR029063">
    <property type="entry name" value="SAM-dependent_MTases_sf"/>
</dbReference>
<dbReference type="NCBIfam" id="NF008734">
    <property type="entry name" value="PRK11760.1"/>
    <property type="match status" value="1"/>
</dbReference>
<dbReference type="PANTHER" id="PTHR37524">
    <property type="entry name" value="RIBOSOMAL RNA LARGE SUBUNIT METHYLTRANSFERASE M"/>
    <property type="match status" value="1"/>
</dbReference>
<dbReference type="PANTHER" id="PTHR37524:SF2">
    <property type="entry name" value="RIBOSOMAL RNA METHYLTRANSFERASE FTSJ DOMAIN-CONTAINING PROTEIN"/>
    <property type="match status" value="1"/>
</dbReference>
<dbReference type="Pfam" id="PF01728">
    <property type="entry name" value="FtsJ"/>
    <property type="match status" value="1"/>
</dbReference>
<dbReference type="Pfam" id="PF18125">
    <property type="entry name" value="RlmM_FDX"/>
    <property type="match status" value="1"/>
</dbReference>
<dbReference type="Pfam" id="PF21239">
    <property type="entry name" value="RLMM_N"/>
    <property type="match status" value="1"/>
</dbReference>
<dbReference type="PIRSF" id="PIRSF028774">
    <property type="entry name" value="UCP028774"/>
    <property type="match status" value="1"/>
</dbReference>
<dbReference type="SUPFAM" id="SSF53335">
    <property type="entry name" value="S-adenosyl-L-methionine-dependent methyltransferases"/>
    <property type="match status" value="1"/>
</dbReference>
<feature type="chain" id="PRO_0000314523" description="Ribosomal RNA large subunit methyltransferase M">
    <location>
        <begin position="1"/>
        <end position="356"/>
    </location>
</feature>
<feature type="active site" description="Proton acceptor" evidence="1">
    <location>
        <position position="305"/>
    </location>
</feature>
<feature type="binding site" evidence="1">
    <location>
        <position position="187"/>
    </location>
    <ligand>
        <name>S-adenosyl-L-methionine</name>
        <dbReference type="ChEBI" id="CHEBI:59789"/>
    </ligand>
</feature>
<feature type="binding site" evidence="1">
    <location>
        <begin position="220"/>
        <end position="223"/>
    </location>
    <ligand>
        <name>S-adenosyl-L-methionine</name>
        <dbReference type="ChEBI" id="CHEBI:59789"/>
    </ligand>
</feature>
<feature type="binding site" evidence="1">
    <location>
        <position position="239"/>
    </location>
    <ligand>
        <name>S-adenosyl-L-methionine</name>
        <dbReference type="ChEBI" id="CHEBI:59789"/>
    </ligand>
</feature>
<feature type="binding site" evidence="1">
    <location>
        <position position="259"/>
    </location>
    <ligand>
        <name>S-adenosyl-L-methionine</name>
        <dbReference type="ChEBI" id="CHEBI:59789"/>
    </ligand>
</feature>
<feature type="binding site" evidence="1">
    <location>
        <position position="276"/>
    </location>
    <ligand>
        <name>S-adenosyl-L-methionine</name>
        <dbReference type="ChEBI" id="CHEBI:59789"/>
    </ligand>
</feature>
<protein>
    <recommendedName>
        <fullName evidence="1">Ribosomal RNA large subunit methyltransferase M</fullName>
        <ecNumber evidence="1">2.1.1.186</ecNumber>
    </recommendedName>
    <alternativeName>
        <fullName evidence="1">23S rRNA (cytidine2498-2'-O)-methyltransferase</fullName>
    </alternativeName>
    <alternativeName>
        <fullName evidence="1">23S rRNA 2'-O-ribose methyltransferase RlmM</fullName>
    </alternativeName>
</protein>